<sequence length="149" mass="17581">MRWTKSSQPRKQRKAFFNAPLHKRQKLMSATLHPELRKKFNRRSLPVRRGDMVRIMRGDFKGHEGEVVEVDLKRLRIYVEGATIERANGEKVYYPIHPSNVMIIEPNLDDPMRRKIIERSGGTPEVEAVPEKSEEEKEEKEKEEEKSEE</sequence>
<gene>
    <name evidence="1" type="primary">rpl24</name>
    <name type="synonym">rplX</name>
    <name type="ordered locus">MK1219</name>
</gene>
<feature type="chain" id="PRO_0000130771" description="Large ribosomal subunit protein uL24">
    <location>
        <begin position="1"/>
        <end position="149"/>
    </location>
</feature>
<feature type="region of interest" description="Disordered" evidence="2">
    <location>
        <begin position="114"/>
        <end position="149"/>
    </location>
</feature>
<feature type="compositionally biased region" description="Basic and acidic residues" evidence="2">
    <location>
        <begin position="129"/>
        <end position="149"/>
    </location>
</feature>
<evidence type="ECO:0000255" key="1">
    <source>
        <dbReference type="HAMAP-Rule" id="MF_01326"/>
    </source>
</evidence>
<evidence type="ECO:0000256" key="2">
    <source>
        <dbReference type="SAM" id="MobiDB-lite"/>
    </source>
</evidence>
<evidence type="ECO:0000305" key="3"/>
<reference key="1">
    <citation type="journal article" date="2002" name="Proc. Natl. Acad. Sci. U.S.A.">
        <title>The complete genome of hyperthermophile Methanopyrus kandleri AV19 and monophyly of archaeal methanogens.</title>
        <authorList>
            <person name="Slesarev A.I."/>
            <person name="Mezhevaya K.V."/>
            <person name="Makarova K.S."/>
            <person name="Polushin N.N."/>
            <person name="Shcherbinina O.V."/>
            <person name="Shakhova V.V."/>
            <person name="Belova G.I."/>
            <person name="Aravind L."/>
            <person name="Natale D.A."/>
            <person name="Rogozin I.B."/>
            <person name="Tatusov R.L."/>
            <person name="Wolf Y.I."/>
            <person name="Stetter K.O."/>
            <person name="Malykh A.G."/>
            <person name="Koonin E.V."/>
            <person name="Kozyavkin S.A."/>
        </authorList>
    </citation>
    <scope>NUCLEOTIDE SEQUENCE [LARGE SCALE GENOMIC DNA]</scope>
    <source>
        <strain>AV19 / DSM 6324 / JCM 9639 / NBRC 100938</strain>
    </source>
</reference>
<protein>
    <recommendedName>
        <fullName evidence="1">Large ribosomal subunit protein uL24</fullName>
    </recommendedName>
    <alternativeName>
        <fullName evidence="3">50S ribosomal protein L24</fullName>
    </alternativeName>
</protein>
<proteinExistence type="inferred from homology"/>
<comment type="function">
    <text evidence="1">One of two assembly initiator proteins, it binds directly to the 5'-end of the 23S rRNA, where it nucleates assembly of the 50S subunit.</text>
</comment>
<comment type="function">
    <text evidence="1">Located at the polypeptide exit tunnel on the outside of the subunit.</text>
</comment>
<comment type="subunit">
    <text evidence="1">Part of the 50S ribosomal subunit.</text>
</comment>
<comment type="similarity">
    <text evidence="1">Belongs to the universal ribosomal protein uL24 family.</text>
</comment>
<name>RL24_METKA</name>
<organism>
    <name type="scientific">Methanopyrus kandleri (strain AV19 / DSM 6324 / JCM 9639 / NBRC 100938)</name>
    <dbReference type="NCBI Taxonomy" id="190192"/>
    <lineage>
        <taxon>Archaea</taxon>
        <taxon>Methanobacteriati</taxon>
        <taxon>Methanobacteriota</taxon>
        <taxon>Methanomada group</taxon>
        <taxon>Methanopyri</taxon>
        <taxon>Methanopyrales</taxon>
        <taxon>Methanopyraceae</taxon>
        <taxon>Methanopyrus</taxon>
    </lineage>
</organism>
<keyword id="KW-1185">Reference proteome</keyword>
<keyword id="KW-0687">Ribonucleoprotein</keyword>
<keyword id="KW-0689">Ribosomal protein</keyword>
<keyword id="KW-0694">RNA-binding</keyword>
<keyword id="KW-0699">rRNA-binding</keyword>
<accession>Q8TW19</accession>
<dbReference type="EMBL" id="AE009439">
    <property type="protein sequence ID" value="AAM02432.1"/>
    <property type="molecule type" value="Genomic_DNA"/>
</dbReference>
<dbReference type="RefSeq" id="WP_011019587.1">
    <property type="nucleotide sequence ID" value="NC_003551.1"/>
</dbReference>
<dbReference type="SMR" id="Q8TW19"/>
<dbReference type="FunCoup" id="Q8TW19">
    <property type="interactions" value="166"/>
</dbReference>
<dbReference type="STRING" id="190192.MK1219"/>
<dbReference type="PaxDb" id="190192-MK1219"/>
<dbReference type="EnsemblBacteria" id="AAM02432">
    <property type="protein sequence ID" value="AAM02432"/>
    <property type="gene ID" value="MK1219"/>
</dbReference>
<dbReference type="GeneID" id="1477814"/>
<dbReference type="KEGG" id="mka:MK1219"/>
<dbReference type="PATRIC" id="fig|190192.8.peg.1322"/>
<dbReference type="HOGENOM" id="CLU_093240_2_1_2"/>
<dbReference type="InParanoid" id="Q8TW19"/>
<dbReference type="OrthoDB" id="10899at2157"/>
<dbReference type="Proteomes" id="UP000001826">
    <property type="component" value="Chromosome"/>
</dbReference>
<dbReference type="GO" id="GO:0015934">
    <property type="term" value="C:large ribosomal subunit"/>
    <property type="evidence" value="ECO:0007669"/>
    <property type="project" value="InterPro"/>
</dbReference>
<dbReference type="GO" id="GO:0019843">
    <property type="term" value="F:rRNA binding"/>
    <property type="evidence" value="ECO:0007669"/>
    <property type="project" value="UniProtKB-UniRule"/>
</dbReference>
<dbReference type="GO" id="GO:0003735">
    <property type="term" value="F:structural constituent of ribosome"/>
    <property type="evidence" value="ECO:0007669"/>
    <property type="project" value="InterPro"/>
</dbReference>
<dbReference type="GO" id="GO:0006412">
    <property type="term" value="P:translation"/>
    <property type="evidence" value="ECO:0007669"/>
    <property type="project" value="UniProtKB-UniRule"/>
</dbReference>
<dbReference type="CDD" id="cd06089">
    <property type="entry name" value="KOW_RPL26"/>
    <property type="match status" value="1"/>
</dbReference>
<dbReference type="FunFam" id="2.30.30.30:FF:000009">
    <property type="entry name" value="60S ribosomal protein L26"/>
    <property type="match status" value="1"/>
</dbReference>
<dbReference type="Gene3D" id="2.30.30.30">
    <property type="match status" value="1"/>
</dbReference>
<dbReference type="HAMAP" id="MF_01326_A">
    <property type="entry name" value="Ribosomal_uL24_A"/>
    <property type="match status" value="1"/>
</dbReference>
<dbReference type="InterPro" id="IPR005824">
    <property type="entry name" value="KOW"/>
</dbReference>
<dbReference type="InterPro" id="IPR014722">
    <property type="entry name" value="Rib_uL2_dom2"/>
</dbReference>
<dbReference type="InterPro" id="IPR005825">
    <property type="entry name" value="Ribosomal_uL24_CS"/>
</dbReference>
<dbReference type="InterPro" id="IPR005756">
    <property type="entry name" value="Ribosomal_uL24_euk/arc"/>
</dbReference>
<dbReference type="InterPro" id="IPR041988">
    <property type="entry name" value="Ribosomal_uL24_KOW"/>
</dbReference>
<dbReference type="InterPro" id="IPR008991">
    <property type="entry name" value="Translation_prot_SH3-like_sf"/>
</dbReference>
<dbReference type="NCBIfam" id="TIGR01080">
    <property type="entry name" value="rplX_A_E"/>
    <property type="match status" value="1"/>
</dbReference>
<dbReference type="PANTHER" id="PTHR11143">
    <property type="entry name" value="60S RIBOSOMAL PROTEIN L26 FAMILY MEMBER"/>
    <property type="match status" value="1"/>
</dbReference>
<dbReference type="Pfam" id="PF00467">
    <property type="entry name" value="KOW"/>
    <property type="match status" value="1"/>
</dbReference>
<dbReference type="Pfam" id="PF16906">
    <property type="entry name" value="Ribosomal_L26"/>
    <property type="match status" value="1"/>
</dbReference>
<dbReference type="SMART" id="SM00739">
    <property type="entry name" value="KOW"/>
    <property type="match status" value="1"/>
</dbReference>
<dbReference type="SUPFAM" id="SSF50104">
    <property type="entry name" value="Translation proteins SH3-like domain"/>
    <property type="match status" value="1"/>
</dbReference>
<dbReference type="PROSITE" id="PS01108">
    <property type="entry name" value="RIBOSOMAL_L24"/>
    <property type="match status" value="1"/>
</dbReference>